<comment type="interaction">
    <interactant intactId="EBI-312011">
        <id>O44400</id>
    </interactant>
    <interactant intactId="EBI-312006">
        <id>Q21319</id>
        <label>scrm-8</label>
    </interactant>
    <organismsDiffer>false</organismsDiffer>
    <experiments>2</experiments>
</comment>
<comment type="interaction">
    <interactant intactId="EBI-312011">
        <id>O44400</id>
    </interactant>
    <interactant intactId="EBI-312137">
        <id>Q9NAD6</id>
        <label>sta-1</label>
    </interactant>
    <organismsDiffer>false</organismsDiffer>
    <experiments>2</experiments>
</comment>
<comment type="alternative products">
    <event type="alternative splicing"/>
    <isoform>
        <id>O44400-1</id>
        <name evidence="2">a</name>
        <sequence type="displayed"/>
    </isoform>
    <isoform>
        <id>O44400-2</id>
        <name evidence="2">b</name>
        <sequence type="described" ref="VSP_051824"/>
    </isoform>
</comment>
<keyword id="KW-0007">Acetylation</keyword>
<keyword id="KW-0025">Alternative splicing</keyword>
<keyword id="KW-0903">Direct protein sequencing</keyword>
<keyword id="KW-1185">Reference proteome</keyword>
<evidence type="ECO:0000269" key="1">
    <source ref="2"/>
</evidence>
<evidence type="ECO:0000303" key="2">
    <source>
    </source>
</evidence>
<evidence type="ECO:0000305" key="3"/>
<sequence>MAHIVQTHKLTLHDVAIDQALVYSSDSNCAELKRTFQVELAHGYNEVKVQNLPFDLVQDSIRVSGAGEAVIHDVSVKNQEGAEFVIPERVLAIKAIFEEKERAKDKVADSRVAVQKRIEGLDNLITEVAKHGKDGAFHFDGRTIESLNALHGFHQDTTVDLRAQIRTLDQDLRKAEEEYARASQDYDNTGYRWRNSAQYASIIVESEAGGAAQLTITYQVNNVSWTPFYDIRVTAGVEAEMHVTYFGKVRQYSGEDWKTVPLVLSTARPAHGVKQLPKLGALEASIVVPEPECNRGGRGGYGGGYAQDSVVMACAAPMMEMGRSRKSMKMSYAAVKSSNIASEFSIGRPATIDDRTDEYKVNIGQFTLDTKLSNVTVPSRNATAFLVANSVNTSDYPLVAGQASIFLDGAFVNKTEFEDAVVSQKFEVSLGVDPNIRIEYKPVRNYQEQSGTVEKINSQVTEKTTAVTNLRPNSVLLTIREQLPRSTDSRIKVHLNTPEAVEVDEASVEPTVGAAITPEKILDYTVQLAPGQSSTFVVKYTTEHPQAEQIRYEEKF</sequence>
<dbReference type="EMBL" id="FO081250">
    <property type="protein sequence ID" value="CCD70196.1"/>
    <property type="molecule type" value="Genomic_DNA"/>
</dbReference>
<dbReference type="EMBL" id="FO081250">
    <property type="protein sequence ID" value="CCD70197.1"/>
    <property type="molecule type" value="Genomic_DNA"/>
</dbReference>
<dbReference type="PIR" id="T32567">
    <property type="entry name" value="T32567"/>
</dbReference>
<dbReference type="RefSeq" id="NP_001023185.1">
    <molecule id="O44400-1"/>
    <property type="nucleotide sequence ID" value="NM_001028014.5"/>
</dbReference>
<dbReference type="RefSeq" id="NP_001023186.1">
    <property type="nucleotide sequence ID" value="NM_001028015.3"/>
</dbReference>
<dbReference type="RefSeq" id="NP_001367794.1">
    <molecule id="O44400-2"/>
    <property type="nucleotide sequence ID" value="NM_001380170.1"/>
</dbReference>
<dbReference type="SMR" id="O44400"/>
<dbReference type="BioGRID" id="42285">
    <property type="interactions" value="46"/>
</dbReference>
<dbReference type="DIP" id="DIP-26757N"/>
<dbReference type="FunCoup" id="O44400">
    <property type="interactions" value="5"/>
</dbReference>
<dbReference type="IntAct" id="O44400">
    <property type="interactions" value="11"/>
</dbReference>
<dbReference type="STRING" id="6239.F37C4.5a.2"/>
<dbReference type="PaxDb" id="6239-F37C4.5a.1"/>
<dbReference type="PeptideAtlas" id="O44400"/>
<dbReference type="EnsemblMetazoa" id="F37C4.5a.1">
    <molecule id="O44400-1"/>
    <property type="protein sequence ID" value="F37C4.5a.1"/>
    <property type="gene ID" value="WBGene00018145"/>
</dbReference>
<dbReference type="EnsemblMetazoa" id="F37C4.5b.1">
    <molecule id="O44400-2"/>
    <property type="protein sequence ID" value="F37C4.5b.1"/>
    <property type="gene ID" value="WBGene00018145"/>
</dbReference>
<dbReference type="GeneID" id="177146"/>
<dbReference type="KEGG" id="cel:CELE_F37C4.5"/>
<dbReference type="UCSC" id="F37C4.5a.1">
    <molecule id="O44400-1"/>
    <property type="organism name" value="c. elegans"/>
</dbReference>
<dbReference type="AGR" id="WB:WBGene00018145"/>
<dbReference type="CTD" id="177146"/>
<dbReference type="WormBase" id="F37C4.5a">
    <molecule id="O44400-1"/>
    <property type="protein sequence ID" value="CE17048"/>
    <property type="gene ID" value="WBGene00018145"/>
</dbReference>
<dbReference type="WormBase" id="F37C4.5b">
    <molecule id="O44400-2"/>
    <property type="protein sequence ID" value="CE33640"/>
    <property type="gene ID" value="WBGene00018145"/>
</dbReference>
<dbReference type="eggNOG" id="ENOG502QWQ0">
    <property type="taxonomic scope" value="Eukaryota"/>
</dbReference>
<dbReference type="GeneTree" id="ENSGT00970000195975"/>
<dbReference type="HOGENOM" id="CLU_010457_2_0_1"/>
<dbReference type="InParanoid" id="O44400"/>
<dbReference type="OMA" id="WEPTYEL"/>
<dbReference type="OrthoDB" id="10068793at2759"/>
<dbReference type="PhylomeDB" id="O44400"/>
<dbReference type="PRO" id="PR:O44400"/>
<dbReference type="Proteomes" id="UP000001940">
    <property type="component" value="Chromosome IV"/>
</dbReference>
<dbReference type="Bgee" id="WBGene00018145">
    <property type="expression patterns" value="Expressed in adult organism and 4 other cell types or tissues"/>
</dbReference>
<dbReference type="GO" id="GO:0005739">
    <property type="term" value="C:mitochondrion"/>
    <property type="evidence" value="ECO:0000318"/>
    <property type="project" value="GO_Central"/>
</dbReference>
<dbReference type="InterPro" id="IPR011935">
    <property type="entry name" value="CHP02231"/>
</dbReference>
<dbReference type="InterPro" id="IPR037291">
    <property type="entry name" value="DUF4139"/>
</dbReference>
<dbReference type="InterPro" id="IPR025554">
    <property type="entry name" value="DUF4140"/>
</dbReference>
<dbReference type="NCBIfam" id="TIGR02231">
    <property type="entry name" value="mucoidy inhibitor MuiA family protein"/>
    <property type="match status" value="1"/>
</dbReference>
<dbReference type="PANTHER" id="PTHR31005">
    <property type="entry name" value="DUF4139 DOMAIN-CONTAINING PROTEIN"/>
    <property type="match status" value="1"/>
</dbReference>
<dbReference type="PANTHER" id="PTHR31005:SF4">
    <property type="entry name" value="PROTEIN F37C4.5"/>
    <property type="match status" value="1"/>
</dbReference>
<dbReference type="Pfam" id="PF13598">
    <property type="entry name" value="DUF4139"/>
    <property type="match status" value="1"/>
</dbReference>
<dbReference type="Pfam" id="PF13600">
    <property type="entry name" value="DUF4140"/>
    <property type="match status" value="1"/>
</dbReference>
<accession>O44400</accession>
<accession>Q86MF4</accession>
<name>F37C4_CAEEL</name>
<gene>
    <name type="ORF">F37C4.5</name>
</gene>
<proteinExistence type="evidence at protein level"/>
<feature type="initiator methionine" description="Removed" evidence="1">
    <location>
        <position position="1"/>
    </location>
</feature>
<feature type="chain" id="PRO_0000087151" description="Protein F37C4.5">
    <location>
        <begin position="2"/>
        <end position="556"/>
    </location>
</feature>
<feature type="modified residue" description="N-acetylalanine" evidence="1">
    <location>
        <position position="2"/>
    </location>
</feature>
<feature type="splice variant" id="VSP_051824" description="In isoform b." evidence="2">
    <location>
        <begin position="1"/>
        <end position="240"/>
    </location>
</feature>
<organism>
    <name type="scientific">Caenorhabditis elegans</name>
    <dbReference type="NCBI Taxonomy" id="6239"/>
    <lineage>
        <taxon>Eukaryota</taxon>
        <taxon>Metazoa</taxon>
        <taxon>Ecdysozoa</taxon>
        <taxon>Nematoda</taxon>
        <taxon>Chromadorea</taxon>
        <taxon>Rhabditida</taxon>
        <taxon>Rhabditina</taxon>
        <taxon>Rhabditomorpha</taxon>
        <taxon>Rhabditoidea</taxon>
        <taxon>Rhabditidae</taxon>
        <taxon>Peloderinae</taxon>
        <taxon>Caenorhabditis</taxon>
    </lineage>
</organism>
<reference key="1">
    <citation type="journal article" date="1998" name="Science">
        <title>Genome sequence of the nematode C. elegans: a platform for investigating biology.</title>
        <authorList>
            <consortium name="The C. elegans sequencing consortium"/>
        </authorList>
    </citation>
    <scope>NUCLEOTIDE SEQUENCE [LARGE SCALE GENOMIC DNA]</scope>
    <scope>ALTERNATIVE SPLICING</scope>
    <source>
        <strain>Bristol N2</strain>
    </source>
</reference>
<reference evidence="3" key="2">
    <citation type="submission" date="2005-09" db="UniProtKB">
        <authorList>
            <person name="Bienvenut W.V."/>
        </authorList>
    </citation>
    <scope>PROTEIN SEQUENCE OF 2-9; 35-89; 96-100; 118-130; 259-268 AND 456-463 (ISOFORM A)</scope>
    <scope>IDENTIFICATION BY MASS SPECTROMETRY</scope>
    <scope>ACETYLATION AT ALA-2</scope>
</reference>
<protein>
    <recommendedName>
        <fullName>Protein F37C4.5</fullName>
    </recommendedName>
</protein>